<dbReference type="EMBL" id="X52741">
    <property type="protein sequence ID" value="CAA36955.1"/>
    <property type="molecule type" value="mRNA"/>
</dbReference>
<dbReference type="PIR" id="S11721">
    <property type="entry name" value="CDNT16"/>
</dbReference>
<dbReference type="SMR" id="P27492"/>
<dbReference type="STRING" id="4097.P27492"/>
<dbReference type="PaxDb" id="4097-P27492"/>
<dbReference type="GeneID" id="107764358"/>
<dbReference type="KEGG" id="nta:107764358"/>
<dbReference type="OMA" id="AYRTGIS"/>
<dbReference type="OrthoDB" id="1858299at2759"/>
<dbReference type="Proteomes" id="UP000084051">
    <property type="component" value="Unplaced"/>
</dbReference>
<dbReference type="GO" id="GO:0009535">
    <property type="term" value="C:chloroplast thylakoid membrane"/>
    <property type="evidence" value="ECO:0000318"/>
    <property type="project" value="GO_Central"/>
</dbReference>
<dbReference type="GO" id="GO:0009522">
    <property type="term" value="C:photosystem I"/>
    <property type="evidence" value="ECO:0007669"/>
    <property type="project" value="UniProtKB-KW"/>
</dbReference>
<dbReference type="GO" id="GO:0009523">
    <property type="term" value="C:photosystem II"/>
    <property type="evidence" value="ECO:0007669"/>
    <property type="project" value="UniProtKB-KW"/>
</dbReference>
<dbReference type="GO" id="GO:0016168">
    <property type="term" value="F:chlorophyll binding"/>
    <property type="evidence" value="ECO:0007669"/>
    <property type="project" value="UniProtKB-KW"/>
</dbReference>
<dbReference type="GO" id="GO:0046872">
    <property type="term" value="F:metal ion binding"/>
    <property type="evidence" value="ECO:0007669"/>
    <property type="project" value="UniProtKB-KW"/>
</dbReference>
<dbReference type="GO" id="GO:0009768">
    <property type="term" value="P:photosynthesis, light harvesting in photosystem I"/>
    <property type="evidence" value="ECO:0000318"/>
    <property type="project" value="GO_Central"/>
</dbReference>
<dbReference type="GO" id="GO:0009416">
    <property type="term" value="P:response to light stimulus"/>
    <property type="evidence" value="ECO:0000318"/>
    <property type="project" value="GO_Central"/>
</dbReference>
<dbReference type="FunFam" id="1.10.3460.10:FF:000001">
    <property type="entry name" value="Chlorophyll a-b binding protein, chloroplastic"/>
    <property type="match status" value="1"/>
</dbReference>
<dbReference type="Gene3D" id="1.10.3460.10">
    <property type="entry name" value="Chlorophyll a/b binding protein domain"/>
    <property type="match status" value="1"/>
</dbReference>
<dbReference type="InterPro" id="IPR001344">
    <property type="entry name" value="Chloro_AB-bd_pln"/>
</dbReference>
<dbReference type="InterPro" id="IPR022796">
    <property type="entry name" value="Chloroa_b-bind"/>
</dbReference>
<dbReference type="PANTHER" id="PTHR21649">
    <property type="entry name" value="CHLOROPHYLL A/B BINDING PROTEIN"/>
    <property type="match status" value="1"/>
</dbReference>
<dbReference type="Pfam" id="PF00504">
    <property type="entry name" value="Chloroa_b-bind"/>
    <property type="match status" value="1"/>
</dbReference>
<dbReference type="SUPFAM" id="SSF103511">
    <property type="entry name" value="Chlorophyll a-b binding protein"/>
    <property type="match status" value="1"/>
</dbReference>
<comment type="function">
    <text>The light-harvesting complex (LHC) functions as a light receptor, it captures and delivers excitation energy to photosystems with which it is closely associated.</text>
</comment>
<comment type="cofactor">
    <text evidence="1">Binds at least 14 chlorophylls (8 Chl-a and 6 Chl-b) and carotenoids such as lutein and neoxanthin.</text>
</comment>
<comment type="subunit">
    <text>The LHC complex consists of chlorophyll a-b binding proteins.</text>
</comment>
<comment type="subcellular location">
    <subcellularLocation>
        <location>Plastid</location>
        <location>Chloroplast thylakoid membrane</location>
        <topology>Multi-pass membrane protein</topology>
    </subcellularLocation>
</comment>
<comment type="domain">
    <text>The N-terminus of the protein extends into the stroma where it is involved with adhesion of granal membranes and post-translational modifications; both are believed to mediate the distribution of excitation energy between photosystems I and II.</text>
</comment>
<comment type="PTM">
    <text evidence="1">Photoregulated by reversible phosphorylation of its threonine residues.</text>
</comment>
<comment type="similarity">
    <text evidence="6">Belongs to the light-harvesting chlorophyll a/b-binding (LHC) protein family.</text>
</comment>
<accession>P27492</accession>
<name>CB21_TOBAC</name>
<proteinExistence type="evidence at transcript level"/>
<reference key="1">
    <citation type="submission" date="1990-04" db="EMBL/GenBank/DDBJ databases">
        <authorList>
            <person name="Jin D.S."/>
            <person name="Bogorad L."/>
        </authorList>
    </citation>
    <scope>NUCLEOTIDE SEQUENCE [MRNA]</scope>
    <source>
        <strain>cv. SR1</strain>
        <tissue>Leaf</tissue>
    </source>
</reference>
<protein>
    <recommendedName>
        <fullName>Chlorophyll a-b binding protein 16, chloroplastic</fullName>
    </recommendedName>
    <alternativeName>
        <fullName>LHCII type I CAB-16</fullName>
        <shortName>LHCP</shortName>
    </alternativeName>
</protein>
<sequence>MAASTTALSSPFAGKAVKLSPSSSEVTGNGKVTMRKTASKAKPVSSGSPWYGPDRVKYLGPFSGESPSYLTGEFPGDYGWDTAGLSADPETFAKNRELEVIHCRWAMLGALGCVFPELLARNGVKFGEAVWFKAGSQIFSEGGLDYLGNPSLVHAQSILAIWACQVVLMGAVEGYRVAGGPLGEVVDPLYPGGSFDPLGLAEDPEAFAELKVKEIKNGRLAMFSMFGFFVQAIVTGKGPLENLADHLADPVNNNAWSYATNFVPGK</sequence>
<organism>
    <name type="scientific">Nicotiana tabacum</name>
    <name type="common">Common tobacco</name>
    <dbReference type="NCBI Taxonomy" id="4097"/>
    <lineage>
        <taxon>Eukaryota</taxon>
        <taxon>Viridiplantae</taxon>
        <taxon>Streptophyta</taxon>
        <taxon>Embryophyta</taxon>
        <taxon>Tracheophyta</taxon>
        <taxon>Spermatophyta</taxon>
        <taxon>Magnoliopsida</taxon>
        <taxon>eudicotyledons</taxon>
        <taxon>Gunneridae</taxon>
        <taxon>Pentapetalae</taxon>
        <taxon>asterids</taxon>
        <taxon>lamiids</taxon>
        <taxon>Solanales</taxon>
        <taxon>Solanaceae</taxon>
        <taxon>Nicotianoideae</taxon>
        <taxon>Nicotianeae</taxon>
        <taxon>Nicotiana</taxon>
    </lineage>
</organism>
<keyword id="KW-0007">Acetylation</keyword>
<keyword id="KW-0148">Chlorophyll</keyword>
<keyword id="KW-0150">Chloroplast</keyword>
<keyword id="KW-0157">Chromophore</keyword>
<keyword id="KW-0460">Magnesium</keyword>
<keyword id="KW-0472">Membrane</keyword>
<keyword id="KW-0479">Metal-binding</keyword>
<keyword id="KW-0597">Phosphoprotein</keyword>
<keyword id="KW-0602">Photosynthesis</keyword>
<keyword id="KW-0603">Photosystem I</keyword>
<keyword id="KW-0604">Photosystem II</keyword>
<keyword id="KW-0934">Plastid</keyword>
<keyword id="KW-1185">Reference proteome</keyword>
<keyword id="KW-0793">Thylakoid</keyword>
<keyword id="KW-0809">Transit peptide</keyword>
<keyword id="KW-0812">Transmembrane</keyword>
<keyword id="KW-1133">Transmembrane helix</keyword>
<feature type="transit peptide" description="Chloroplast" evidence="4">
    <location>
        <begin position="1"/>
        <end position="34"/>
    </location>
</feature>
<feature type="chain" id="PRO_0000003702" description="Chlorophyll a-b binding protein 16, chloroplastic">
    <location>
        <begin position="35"/>
        <end position="266"/>
    </location>
</feature>
<feature type="transmembrane region" description="Helical" evidence="4">
    <location>
        <begin position="100"/>
        <end position="120"/>
    </location>
</feature>
<feature type="transmembrane region" description="Helical" evidence="4">
    <location>
        <begin position="152"/>
        <end position="172"/>
    </location>
</feature>
<feature type="transmembrane region" description="Helical" evidence="4">
    <location>
        <begin position="220"/>
        <end position="240"/>
    </location>
</feature>
<feature type="region of interest" description="Disordered" evidence="5">
    <location>
        <begin position="17"/>
        <end position="46"/>
    </location>
</feature>
<feature type="binding site" description="axial binding residue" evidence="3">
    <location>
        <position position="58"/>
    </location>
    <ligand>
        <name>chlorophyll b</name>
        <dbReference type="ChEBI" id="CHEBI:61721"/>
        <label>1</label>
    </ligand>
    <ligandPart>
        <name>Mg</name>
        <dbReference type="ChEBI" id="CHEBI:25107"/>
    </ligandPart>
</feature>
<feature type="binding site" evidence="1">
    <location>
        <position position="80"/>
    </location>
    <ligand>
        <name>chlorophyll a</name>
        <dbReference type="ChEBI" id="CHEBI:58416"/>
        <label>1</label>
    </ligand>
</feature>
<feature type="binding site" evidence="1">
    <location>
        <position position="86"/>
    </location>
    <ligand>
        <name>chlorophyll a</name>
        <dbReference type="ChEBI" id="CHEBI:58416"/>
        <label>1</label>
    </ligand>
</feature>
<feature type="binding site" description="axial binding residue" evidence="3">
    <location>
        <position position="99"/>
    </location>
    <ligand>
        <name>chlorophyll a</name>
        <dbReference type="ChEBI" id="CHEBI:58416"/>
        <label>1</label>
    </ligand>
    <ligandPart>
        <name>Mg</name>
        <dbReference type="ChEBI" id="CHEBI:25107"/>
    </ligandPart>
</feature>
<feature type="binding site" description="axial binding residue" evidence="3">
    <location>
        <position position="102"/>
    </location>
    <ligand>
        <name>chlorophyll a</name>
        <dbReference type="ChEBI" id="CHEBI:58416"/>
        <label>2</label>
    </ligand>
    <ligandPart>
        <name>Mg</name>
        <dbReference type="ChEBI" id="CHEBI:25107"/>
    </ligandPart>
</feature>
<feature type="binding site" evidence="1">
    <location>
        <position position="104"/>
    </location>
    <ligand>
        <name>chlorophyll b</name>
        <dbReference type="ChEBI" id="CHEBI:61721"/>
        <label>2</label>
    </ligand>
</feature>
<feature type="binding site" evidence="1">
    <location>
        <position position="137"/>
    </location>
    <ligand>
        <name>chlorophyll a</name>
        <dbReference type="ChEBI" id="CHEBI:58416"/>
        <label>3</label>
    </ligand>
</feature>
<feature type="binding site" evidence="1">
    <location>
        <position position="147"/>
    </location>
    <ligand>
        <name>chlorophyll a</name>
        <dbReference type="ChEBI" id="CHEBI:58416"/>
        <label>3</label>
    </ligand>
</feature>
<feature type="binding site" description="axial binding residue" evidence="3">
    <location>
        <position position="153"/>
    </location>
    <ligand>
        <name>chlorophyll b</name>
        <dbReference type="ChEBI" id="CHEBI:61721"/>
        <label>2</label>
    </ligand>
    <ligandPart>
        <name>Mg</name>
        <dbReference type="ChEBI" id="CHEBI:25107"/>
    </ligandPart>
</feature>
<feature type="binding site" evidence="1">
    <location>
        <position position="157"/>
    </location>
    <ligand>
        <name>chlorophyll b</name>
        <dbReference type="ChEBI" id="CHEBI:61721"/>
        <label>3</label>
    </ligand>
</feature>
<feature type="binding site" evidence="1">
    <location>
        <position position="165"/>
    </location>
    <ligand>
        <name>chlorophyll b</name>
        <dbReference type="ChEBI" id="CHEBI:61721"/>
        <label>4</label>
    </ligand>
</feature>
<feature type="binding site" evidence="2">
    <location>
        <position position="165"/>
    </location>
    <ligand>
        <name>chlorophyll b</name>
        <dbReference type="ChEBI" id="CHEBI:61721"/>
        <label>5</label>
    </ligand>
</feature>
<feature type="binding site" description="axial binding residue" evidence="3">
    <location>
        <position position="173"/>
    </location>
    <ligand>
        <name>chlorophyll b</name>
        <dbReference type="ChEBI" id="CHEBI:61721"/>
        <label>3</label>
    </ligand>
    <ligandPart>
        <name>Mg</name>
        <dbReference type="ChEBI" id="CHEBI:25107"/>
    </ligandPart>
</feature>
<feature type="binding site" evidence="1">
    <location>
        <position position="176"/>
    </location>
    <ligand>
        <name>chlorophyll b</name>
        <dbReference type="ChEBI" id="CHEBI:61721"/>
        <label>4</label>
    </ligand>
</feature>
<feature type="binding site" evidence="1">
    <location>
        <position position="182"/>
    </location>
    <ligand>
        <name>chlorophyll b</name>
        <dbReference type="ChEBI" id="CHEBI:61721"/>
        <label>2</label>
    </ligand>
</feature>
<feature type="binding site" evidence="1">
    <location>
        <position position="213"/>
    </location>
    <ligand>
        <name>chlorophyll a</name>
        <dbReference type="ChEBI" id="CHEBI:58416"/>
        <label>5</label>
    </ligand>
</feature>
<feature type="binding site" description="axial binding residue" evidence="3">
    <location>
        <position position="214"/>
    </location>
    <ligand>
        <name>chlorophyll a</name>
        <dbReference type="ChEBI" id="CHEBI:58416"/>
        <label>3</label>
    </ligand>
    <ligandPart>
        <name>Mg</name>
        <dbReference type="ChEBI" id="CHEBI:25107"/>
    </ligandPart>
</feature>
<feature type="binding site" description="axial binding residue" evidence="3">
    <location>
        <position position="217"/>
    </location>
    <ligand>
        <name>chlorophyll a</name>
        <dbReference type="ChEBI" id="CHEBI:58416"/>
        <label>4</label>
    </ligand>
    <ligandPart>
        <name>Mg</name>
        <dbReference type="ChEBI" id="CHEBI:25107"/>
    </ligandPart>
</feature>
<feature type="binding site" evidence="1">
    <location>
        <position position="219"/>
    </location>
    <ligand>
        <name>chlorophyll a</name>
        <dbReference type="ChEBI" id="CHEBI:58416"/>
        <label>1</label>
    </ligand>
</feature>
<feature type="binding site" description="axial binding residue" evidence="3">
    <location>
        <position position="231"/>
    </location>
    <ligand>
        <name>chlorophyll a</name>
        <dbReference type="ChEBI" id="CHEBI:58416"/>
        <label>5</label>
    </ligand>
    <ligandPart>
        <name>Mg</name>
        <dbReference type="ChEBI" id="CHEBI:25107"/>
    </ligandPart>
</feature>
<feature type="binding site" description="axial binding residue" evidence="3">
    <location>
        <position position="246"/>
    </location>
    <ligand>
        <name>chlorophyll a</name>
        <dbReference type="ChEBI" id="CHEBI:58416"/>
        <label>6</label>
    </ligand>
    <ligandPart>
        <name>Mg</name>
        <dbReference type="ChEBI" id="CHEBI:25107"/>
    </ligandPart>
</feature>
<feature type="binding site" evidence="1">
    <location>
        <position position="255"/>
    </location>
    <ligand>
        <name>chlorophyll a</name>
        <dbReference type="ChEBI" id="CHEBI:58416"/>
        <label>6</label>
    </ligand>
</feature>
<feature type="binding site" evidence="1">
    <location>
        <position position="262"/>
    </location>
    <ligand>
        <name>chlorophyll b</name>
        <dbReference type="ChEBI" id="CHEBI:61721"/>
        <label>5</label>
    </ligand>
</feature>
<feature type="modified residue" description="N2-acetylarginine" evidence="1">
    <location>
        <position position="35"/>
    </location>
</feature>
<feature type="modified residue" description="Phosphothreonine" evidence="1">
    <location>
        <position position="37"/>
    </location>
</feature>
<gene>
    <name type="primary">CAB16</name>
</gene>
<evidence type="ECO:0000250" key="1"/>
<evidence type="ECO:0000250" key="2">
    <source>
        <dbReference type="UniProtKB" id="P07371"/>
    </source>
</evidence>
<evidence type="ECO:0000250" key="3">
    <source>
        <dbReference type="UniProtKB" id="P12333"/>
    </source>
</evidence>
<evidence type="ECO:0000255" key="4"/>
<evidence type="ECO:0000256" key="5">
    <source>
        <dbReference type="SAM" id="MobiDB-lite"/>
    </source>
</evidence>
<evidence type="ECO:0000305" key="6"/>